<organism>
    <name type="scientific">Bacillus cereus (strain G9842)</name>
    <dbReference type="NCBI Taxonomy" id="405531"/>
    <lineage>
        <taxon>Bacteria</taxon>
        <taxon>Bacillati</taxon>
        <taxon>Bacillota</taxon>
        <taxon>Bacilli</taxon>
        <taxon>Bacillales</taxon>
        <taxon>Bacillaceae</taxon>
        <taxon>Bacillus</taxon>
        <taxon>Bacillus cereus group</taxon>
    </lineage>
</organism>
<keyword id="KW-0378">Hydrolase</keyword>
<keyword id="KW-0479">Metal-binding</keyword>
<keyword id="KW-0665">Pyrimidine biosynthesis</keyword>
<keyword id="KW-0862">Zinc</keyword>
<name>PYRC_BACC2</name>
<protein>
    <recommendedName>
        <fullName evidence="1">Dihydroorotase</fullName>
        <shortName evidence="1">DHOase</shortName>
        <ecNumber evidence="1">3.5.2.3</ecNumber>
    </recommendedName>
</protein>
<sequence length="428" mass="46656">MNYLFKNGRYMNEEGKIVATDLLVQDGKIAKVAENITADNAEVIEVNGNLIAPGLVDVHVHLREPGGEHKETIETGTLAAAKGGFTTICSMPNTRPVPDCREHMEDLQKRIKEKAHVNVLPYGAITVRQAGSEMTDFETLKELGAFAFTDDGVGVQDASMMLAAMKRAAKLNMAVVAHCEENTLINKGCVHEGKFSEKHGLNGIPSVCESVHIARDILLAEAADCHYHVCHVSTKGSVRVIRDAKRAGIKVTAEVTPHHLVLCEDDIPSVDPNFKMNPPLRGKEDHAALIEGLLDGTIDMIATDHAPHTAEEKAQGIERAPFGITGFETAFPLLYTNLVKKGIITLEQLIQFLTEKPADTFGLEAGRLKEGRTADITIIDLEQEEEIDPTTFLSKGKNTPFAGWKCQGWPVMTIVGGKIAWQKESALV</sequence>
<evidence type="ECO:0000255" key="1">
    <source>
        <dbReference type="HAMAP-Rule" id="MF_00220"/>
    </source>
</evidence>
<proteinExistence type="inferred from homology"/>
<comment type="function">
    <text evidence="1">Catalyzes the reversible cyclization of carbamoyl aspartate to dihydroorotate.</text>
</comment>
<comment type="catalytic activity">
    <reaction evidence="1">
        <text>(S)-dihydroorotate + H2O = N-carbamoyl-L-aspartate + H(+)</text>
        <dbReference type="Rhea" id="RHEA:24296"/>
        <dbReference type="ChEBI" id="CHEBI:15377"/>
        <dbReference type="ChEBI" id="CHEBI:15378"/>
        <dbReference type="ChEBI" id="CHEBI:30864"/>
        <dbReference type="ChEBI" id="CHEBI:32814"/>
        <dbReference type="EC" id="3.5.2.3"/>
    </reaction>
</comment>
<comment type="cofactor">
    <cofactor evidence="1">
        <name>Zn(2+)</name>
        <dbReference type="ChEBI" id="CHEBI:29105"/>
    </cofactor>
    <text evidence="1">Binds 2 Zn(2+) ions per subunit.</text>
</comment>
<comment type="pathway">
    <text evidence="1">Pyrimidine metabolism; UMP biosynthesis via de novo pathway; (S)-dihydroorotate from bicarbonate: step 3/3.</text>
</comment>
<comment type="similarity">
    <text evidence="1">Belongs to the metallo-dependent hydrolases superfamily. DHOase family. Class I DHOase subfamily.</text>
</comment>
<dbReference type="EC" id="3.5.2.3" evidence="1"/>
<dbReference type="EMBL" id="CP001186">
    <property type="protein sequence ID" value="ACK93450.1"/>
    <property type="molecule type" value="Genomic_DNA"/>
</dbReference>
<dbReference type="RefSeq" id="WP_001108387.1">
    <property type="nucleotide sequence ID" value="NC_011772.1"/>
</dbReference>
<dbReference type="SMR" id="B7IUP8"/>
<dbReference type="KEGG" id="bcg:BCG9842_B1255"/>
<dbReference type="HOGENOM" id="CLU_015572_1_0_9"/>
<dbReference type="UniPathway" id="UPA00070">
    <property type="reaction ID" value="UER00117"/>
</dbReference>
<dbReference type="Proteomes" id="UP000006744">
    <property type="component" value="Chromosome"/>
</dbReference>
<dbReference type="GO" id="GO:0005737">
    <property type="term" value="C:cytoplasm"/>
    <property type="evidence" value="ECO:0007669"/>
    <property type="project" value="TreeGrafter"/>
</dbReference>
<dbReference type="GO" id="GO:0004038">
    <property type="term" value="F:allantoinase activity"/>
    <property type="evidence" value="ECO:0007669"/>
    <property type="project" value="TreeGrafter"/>
</dbReference>
<dbReference type="GO" id="GO:0004151">
    <property type="term" value="F:dihydroorotase activity"/>
    <property type="evidence" value="ECO:0007669"/>
    <property type="project" value="UniProtKB-UniRule"/>
</dbReference>
<dbReference type="GO" id="GO:0008270">
    <property type="term" value="F:zinc ion binding"/>
    <property type="evidence" value="ECO:0007669"/>
    <property type="project" value="UniProtKB-UniRule"/>
</dbReference>
<dbReference type="GO" id="GO:0044205">
    <property type="term" value="P:'de novo' UMP biosynthetic process"/>
    <property type="evidence" value="ECO:0007669"/>
    <property type="project" value="UniProtKB-UniRule"/>
</dbReference>
<dbReference type="GO" id="GO:0006145">
    <property type="term" value="P:purine nucleobase catabolic process"/>
    <property type="evidence" value="ECO:0007669"/>
    <property type="project" value="TreeGrafter"/>
</dbReference>
<dbReference type="CDD" id="cd01317">
    <property type="entry name" value="DHOase_IIa"/>
    <property type="match status" value="1"/>
</dbReference>
<dbReference type="FunFam" id="2.30.40.10:FF:000007">
    <property type="entry name" value="Dihydroorotase"/>
    <property type="match status" value="1"/>
</dbReference>
<dbReference type="FunFam" id="3.20.20.140:FF:000025">
    <property type="entry name" value="Dihydroorotase"/>
    <property type="match status" value="1"/>
</dbReference>
<dbReference type="Gene3D" id="3.20.20.140">
    <property type="entry name" value="Metal-dependent hydrolases"/>
    <property type="match status" value="1"/>
</dbReference>
<dbReference type="Gene3D" id="2.30.40.10">
    <property type="entry name" value="Urease, subunit C, domain 1"/>
    <property type="match status" value="2"/>
</dbReference>
<dbReference type="HAMAP" id="MF_00220_B">
    <property type="entry name" value="PyrC_classI_B"/>
    <property type="match status" value="1"/>
</dbReference>
<dbReference type="InterPro" id="IPR006680">
    <property type="entry name" value="Amidohydro-rel"/>
</dbReference>
<dbReference type="InterPro" id="IPR004722">
    <property type="entry name" value="DHOase"/>
</dbReference>
<dbReference type="InterPro" id="IPR050138">
    <property type="entry name" value="DHOase/Allantoinase_Hydrolase"/>
</dbReference>
<dbReference type="InterPro" id="IPR002195">
    <property type="entry name" value="Dihydroorotase_CS"/>
</dbReference>
<dbReference type="InterPro" id="IPR011059">
    <property type="entry name" value="Metal-dep_hydrolase_composite"/>
</dbReference>
<dbReference type="InterPro" id="IPR032466">
    <property type="entry name" value="Metal_Hydrolase"/>
</dbReference>
<dbReference type="NCBIfam" id="NF006837">
    <property type="entry name" value="PRK09357.1-2"/>
    <property type="match status" value="1"/>
</dbReference>
<dbReference type="NCBIfam" id="TIGR00857">
    <property type="entry name" value="pyrC_multi"/>
    <property type="match status" value="1"/>
</dbReference>
<dbReference type="PANTHER" id="PTHR43668">
    <property type="entry name" value="ALLANTOINASE"/>
    <property type="match status" value="1"/>
</dbReference>
<dbReference type="PANTHER" id="PTHR43668:SF2">
    <property type="entry name" value="ALLANTOINASE"/>
    <property type="match status" value="1"/>
</dbReference>
<dbReference type="Pfam" id="PF01979">
    <property type="entry name" value="Amidohydro_1"/>
    <property type="match status" value="1"/>
</dbReference>
<dbReference type="SUPFAM" id="SSF51338">
    <property type="entry name" value="Composite domain of metallo-dependent hydrolases"/>
    <property type="match status" value="1"/>
</dbReference>
<dbReference type="SUPFAM" id="SSF51556">
    <property type="entry name" value="Metallo-dependent hydrolases"/>
    <property type="match status" value="1"/>
</dbReference>
<dbReference type="PROSITE" id="PS00482">
    <property type="entry name" value="DIHYDROOROTASE_1"/>
    <property type="match status" value="1"/>
</dbReference>
<dbReference type="PROSITE" id="PS00483">
    <property type="entry name" value="DIHYDROOROTASE_2"/>
    <property type="match status" value="1"/>
</dbReference>
<reference key="1">
    <citation type="submission" date="2008-10" db="EMBL/GenBank/DDBJ databases">
        <title>Genome sequence of Bacillus cereus G9842.</title>
        <authorList>
            <person name="Dodson R.J."/>
            <person name="Durkin A.S."/>
            <person name="Rosovitz M.J."/>
            <person name="Rasko D.A."/>
            <person name="Hoffmaster A."/>
            <person name="Ravel J."/>
            <person name="Sutton G."/>
        </authorList>
    </citation>
    <scope>NUCLEOTIDE SEQUENCE [LARGE SCALE GENOMIC DNA]</scope>
    <source>
        <strain>G9842</strain>
    </source>
</reference>
<feature type="chain" id="PRO_1000193094" description="Dihydroorotase">
    <location>
        <begin position="1"/>
        <end position="428"/>
    </location>
</feature>
<feature type="active site" evidence="1">
    <location>
        <position position="304"/>
    </location>
</feature>
<feature type="binding site" evidence="1">
    <location>
        <position position="59"/>
    </location>
    <ligand>
        <name>Zn(2+)</name>
        <dbReference type="ChEBI" id="CHEBI:29105"/>
        <label>1</label>
    </ligand>
</feature>
<feature type="binding site" evidence="1">
    <location>
        <begin position="61"/>
        <end position="63"/>
    </location>
    <ligand>
        <name>substrate</name>
    </ligand>
</feature>
<feature type="binding site" evidence="1">
    <location>
        <position position="61"/>
    </location>
    <ligand>
        <name>Zn(2+)</name>
        <dbReference type="ChEBI" id="CHEBI:29105"/>
        <label>1</label>
    </ligand>
</feature>
<feature type="binding site" evidence="1">
    <location>
        <position position="93"/>
    </location>
    <ligand>
        <name>substrate</name>
    </ligand>
</feature>
<feature type="binding site" evidence="1">
    <location>
        <position position="151"/>
    </location>
    <ligand>
        <name>Zn(2+)</name>
        <dbReference type="ChEBI" id="CHEBI:29105"/>
        <label>1</label>
    </ligand>
</feature>
<feature type="binding site" evidence="1">
    <location>
        <position position="151"/>
    </location>
    <ligand>
        <name>Zn(2+)</name>
        <dbReference type="ChEBI" id="CHEBI:29105"/>
        <label>2</label>
    </ligand>
</feature>
<feature type="binding site" evidence="1">
    <location>
        <position position="178"/>
    </location>
    <ligand>
        <name>Zn(2+)</name>
        <dbReference type="ChEBI" id="CHEBI:29105"/>
        <label>2</label>
    </ligand>
</feature>
<feature type="binding site" evidence="1">
    <location>
        <position position="231"/>
    </location>
    <ligand>
        <name>Zn(2+)</name>
        <dbReference type="ChEBI" id="CHEBI:29105"/>
        <label>2</label>
    </ligand>
</feature>
<feature type="binding site" evidence="1">
    <location>
        <position position="277"/>
    </location>
    <ligand>
        <name>substrate</name>
    </ligand>
</feature>
<feature type="binding site" evidence="1">
    <location>
        <position position="304"/>
    </location>
    <ligand>
        <name>Zn(2+)</name>
        <dbReference type="ChEBI" id="CHEBI:29105"/>
        <label>1</label>
    </ligand>
</feature>
<feature type="binding site" evidence="1">
    <location>
        <position position="308"/>
    </location>
    <ligand>
        <name>substrate</name>
    </ligand>
</feature>
<feature type="binding site" evidence="1">
    <location>
        <begin position="322"/>
        <end position="323"/>
    </location>
    <ligand>
        <name>substrate</name>
    </ligand>
</feature>
<accession>B7IUP8</accession>
<gene>
    <name evidence="1" type="primary">pyrC</name>
    <name type="ordered locus">BCG9842_B1255</name>
</gene>